<organism>
    <name type="scientific">Pseudomonas aeruginosa (strain ATCC 15692 / DSM 22644 / CIP 104116 / JCM 14847 / LMG 12228 / 1C / PRS 101 / PAO1)</name>
    <dbReference type="NCBI Taxonomy" id="208964"/>
    <lineage>
        <taxon>Bacteria</taxon>
        <taxon>Pseudomonadati</taxon>
        <taxon>Pseudomonadota</taxon>
        <taxon>Gammaproteobacteria</taxon>
        <taxon>Pseudomonadales</taxon>
        <taxon>Pseudomonadaceae</taxon>
        <taxon>Pseudomonas</taxon>
    </lineage>
</organism>
<keyword id="KW-0002">3D-structure</keyword>
<keyword id="KW-0131">Cell cycle</keyword>
<keyword id="KW-0132">Cell division</keyword>
<keyword id="KW-0133">Cell shape</keyword>
<keyword id="KW-0961">Cell wall biogenesis/degradation</keyword>
<keyword id="KW-0963">Cytoplasm</keyword>
<keyword id="KW-0573">Peptidoglycan synthesis</keyword>
<keyword id="KW-0670">Pyruvate</keyword>
<keyword id="KW-1185">Reference proteome</keyword>
<keyword id="KW-0808">Transferase</keyword>
<protein>
    <recommendedName>
        <fullName evidence="1">UDP-N-acetylglucosamine 1-carboxyvinyltransferase</fullName>
        <ecNumber evidence="1">2.5.1.7</ecNumber>
    </recommendedName>
    <alternativeName>
        <fullName evidence="1">Enoylpyruvate transferase</fullName>
    </alternativeName>
    <alternativeName>
        <fullName evidence="1">UDP-N-acetylglucosamine enolpyruvyl transferase</fullName>
        <shortName evidence="1">EPT</shortName>
    </alternativeName>
</protein>
<accession>Q9HVW7</accession>
<feature type="chain" id="PRO_0000178901" description="UDP-N-acetylglucosamine 1-carboxyvinyltransferase">
    <location>
        <begin position="1"/>
        <end position="421"/>
    </location>
</feature>
<feature type="active site" description="Proton donor" evidence="1">
    <location>
        <position position="117"/>
    </location>
</feature>
<feature type="binding site" evidence="2">
    <location>
        <begin position="22"/>
        <end position="23"/>
    </location>
    <ligand>
        <name>phosphoenolpyruvate</name>
        <dbReference type="ChEBI" id="CHEBI:58702"/>
    </ligand>
</feature>
<feature type="binding site" evidence="1">
    <location>
        <position position="93"/>
    </location>
    <ligand>
        <name>UDP-N-acetyl-alpha-D-glucosamine</name>
        <dbReference type="ChEBI" id="CHEBI:57705"/>
    </ligand>
</feature>
<feature type="binding site" evidence="2">
    <location>
        <begin position="122"/>
        <end position="126"/>
    </location>
    <ligand>
        <name>UDP-N-acetyl-alpha-D-glucosamine</name>
        <dbReference type="ChEBI" id="CHEBI:57705"/>
    </ligand>
</feature>
<feature type="binding site" evidence="2">
    <location>
        <begin position="165"/>
        <end position="167"/>
    </location>
    <ligand>
        <name>UDP-N-acetyl-alpha-D-glucosamine</name>
        <dbReference type="ChEBI" id="CHEBI:57705"/>
    </ligand>
</feature>
<feature type="binding site" evidence="2">
    <location>
        <position position="308"/>
    </location>
    <ligand>
        <name>UDP-N-acetyl-alpha-D-glucosamine</name>
        <dbReference type="ChEBI" id="CHEBI:57705"/>
    </ligand>
</feature>
<feature type="binding site" evidence="2">
    <location>
        <position position="330"/>
    </location>
    <ligand>
        <name>UDP-N-acetyl-alpha-D-glucosamine</name>
        <dbReference type="ChEBI" id="CHEBI:57705"/>
    </ligand>
</feature>
<feature type="modified residue" description="2-(S-cysteinyl)pyruvic acid O-phosphothioketal" evidence="1">
    <location>
        <position position="117"/>
    </location>
</feature>
<feature type="strand" evidence="3">
    <location>
        <begin position="3"/>
        <end position="7"/>
    </location>
</feature>
<feature type="strand" evidence="3">
    <location>
        <begin position="15"/>
        <end position="17"/>
    </location>
</feature>
<feature type="helix" evidence="3">
    <location>
        <begin position="22"/>
        <end position="31"/>
    </location>
</feature>
<feature type="helix" evidence="3">
    <location>
        <begin position="32"/>
        <end position="34"/>
    </location>
</feature>
<feature type="strand" evidence="3">
    <location>
        <begin position="35"/>
        <end position="37"/>
    </location>
</feature>
<feature type="strand" evidence="3">
    <location>
        <begin position="39"/>
        <end position="43"/>
    </location>
</feature>
<feature type="helix" evidence="3">
    <location>
        <begin position="48"/>
        <end position="59"/>
    </location>
</feature>
<feature type="strand" evidence="3">
    <location>
        <begin position="72"/>
        <end position="74"/>
    </location>
</feature>
<feature type="helix" evidence="3">
    <location>
        <begin position="76"/>
        <end position="78"/>
    </location>
</feature>
<feature type="helix" evidence="3">
    <location>
        <begin position="86"/>
        <end position="89"/>
    </location>
</feature>
<feature type="helix" evidence="3">
    <location>
        <begin position="93"/>
        <end position="98"/>
    </location>
</feature>
<feature type="helix" evidence="3">
    <location>
        <begin position="99"/>
        <end position="106"/>
    </location>
</feature>
<feature type="strand" evidence="3">
    <location>
        <begin position="107"/>
        <end position="112"/>
    </location>
</feature>
<feature type="strand" evidence="3">
    <location>
        <begin position="117"/>
        <end position="120"/>
    </location>
</feature>
<feature type="helix" evidence="3">
    <location>
        <begin position="125"/>
        <end position="132"/>
    </location>
</feature>
<feature type="turn" evidence="3">
    <location>
        <begin position="133"/>
        <end position="135"/>
    </location>
</feature>
<feature type="strand" evidence="3">
    <location>
        <begin position="137"/>
        <end position="141"/>
    </location>
</feature>
<feature type="strand" evidence="3">
    <location>
        <begin position="144"/>
        <end position="148"/>
    </location>
</feature>
<feature type="strand" evidence="3">
    <location>
        <begin position="158"/>
        <end position="160"/>
    </location>
</feature>
<feature type="helix" evidence="3">
    <location>
        <begin position="166"/>
        <end position="177"/>
    </location>
</feature>
<feature type="strand" evidence="3">
    <location>
        <begin position="179"/>
        <end position="187"/>
    </location>
</feature>
<feature type="helix" evidence="3">
    <location>
        <begin position="192"/>
        <end position="203"/>
    </location>
</feature>
<feature type="strand" evidence="3">
    <location>
        <begin position="213"/>
        <end position="219"/>
    </location>
</feature>
<feature type="strand" evidence="3">
    <location>
        <begin position="228"/>
        <end position="230"/>
    </location>
</feature>
<feature type="helix" evidence="3">
    <location>
        <begin position="235"/>
        <end position="247"/>
    </location>
</feature>
<feature type="strand" evidence="3">
    <location>
        <begin position="251"/>
        <end position="256"/>
    </location>
</feature>
<feature type="helix" evidence="3">
    <location>
        <begin position="259"/>
        <end position="261"/>
    </location>
</feature>
<feature type="helix" evidence="3">
    <location>
        <begin position="263"/>
        <end position="271"/>
    </location>
</feature>
<feature type="strand" evidence="3">
    <location>
        <begin position="275"/>
        <end position="279"/>
    </location>
</feature>
<feature type="strand" evidence="3">
    <location>
        <begin position="282"/>
        <end position="286"/>
    </location>
</feature>
<feature type="strand" evidence="3">
    <location>
        <begin position="297"/>
        <end position="299"/>
    </location>
</feature>
<feature type="helix" evidence="3">
    <location>
        <begin position="307"/>
        <end position="317"/>
    </location>
</feature>
<feature type="strand" evidence="3">
    <location>
        <begin position="320"/>
        <end position="327"/>
    </location>
</feature>
<feature type="strand" evidence="3">
    <location>
        <begin position="329"/>
        <end position="331"/>
    </location>
</feature>
<feature type="helix" evidence="3">
    <location>
        <begin position="336"/>
        <end position="343"/>
    </location>
</feature>
<feature type="strand" evidence="3">
    <location>
        <begin position="347"/>
        <end position="351"/>
    </location>
</feature>
<feature type="strand" evidence="3">
    <location>
        <begin position="354"/>
        <end position="358"/>
    </location>
</feature>
<feature type="turn" evidence="3">
    <location>
        <begin position="373"/>
        <end position="376"/>
    </location>
</feature>
<feature type="helix" evidence="3">
    <location>
        <begin position="377"/>
        <end position="384"/>
    </location>
</feature>
<feature type="strand" evidence="3">
    <location>
        <begin position="386"/>
        <end position="393"/>
    </location>
</feature>
<feature type="helix" evidence="3">
    <location>
        <begin position="396"/>
        <end position="401"/>
    </location>
</feature>
<feature type="strand" evidence="3">
    <location>
        <begin position="402"/>
        <end position="404"/>
    </location>
</feature>
<feature type="helix" evidence="3">
    <location>
        <begin position="405"/>
        <end position="411"/>
    </location>
</feature>
<feature type="strand" evidence="3">
    <location>
        <begin position="415"/>
        <end position="419"/>
    </location>
</feature>
<sequence length="421" mass="44646">MDKLIITGGNRLDGEIRISGAKNSALPILAATLLADTPVTVCNLPHLHDITTMIELFGRMGVQPIIDEKLNVEVDASSIKTLVAPYELVKTMRASILVLGPMLARFGEAEVALPGGCAIGSRPVDLHIRGLEAMGAQIEVEGGYIKAKAPAGGLRGGHFFFDTVSVTGTENLMMAAALANGRTVLQNAAREPEVVDLANCLNAMGANVQGAGSDTIVIEGVKRLGGARYDVLPDRIETGTYLVAAAATGGRVKLKDTDPTILEAVLQKLEEAGAHISTGSNWIELDMKGNRPKAVNVRTAPYPAFPTDMQAQFISMNAVAEGTGAVIETVFENRFMHVYEMNRMGAQILVEGNTAIVTGVPKLKGAPVMATDLRASASLVIAGLVAEGDTLIDRIYHIDRGYECIEEKLQLLGAKIRRVPG</sequence>
<reference key="1">
    <citation type="journal article" date="2000" name="Nature">
        <title>Complete genome sequence of Pseudomonas aeruginosa PAO1, an opportunistic pathogen.</title>
        <authorList>
            <person name="Stover C.K."/>
            <person name="Pham X.-Q.T."/>
            <person name="Erwin A.L."/>
            <person name="Mizoguchi S.D."/>
            <person name="Warrener P."/>
            <person name="Hickey M.J."/>
            <person name="Brinkman F.S.L."/>
            <person name="Hufnagle W.O."/>
            <person name="Kowalik D.J."/>
            <person name="Lagrou M."/>
            <person name="Garber R.L."/>
            <person name="Goltry L."/>
            <person name="Tolentino E."/>
            <person name="Westbrock-Wadman S."/>
            <person name="Yuan Y."/>
            <person name="Brody L.L."/>
            <person name="Coulter S.N."/>
            <person name="Folger K.R."/>
            <person name="Kas A."/>
            <person name="Larbig K."/>
            <person name="Lim R.M."/>
            <person name="Smith K.A."/>
            <person name="Spencer D.H."/>
            <person name="Wong G.K.-S."/>
            <person name="Wu Z."/>
            <person name="Paulsen I.T."/>
            <person name="Reizer J."/>
            <person name="Saier M.H. Jr."/>
            <person name="Hancock R.E.W."/>
            <person name="Lory S."/>
            <person name="Olson M.V."/>
        </authorList>
    </citation>
    <scope>NUCLEOTIDE SEQUENCE [LARGE SCALE GENOMIC DNA]</scope>
    <source>
        <strain>ATCC 15692 / DSM 22644 / CIP 104116 / JCM 14847 / LMG 12228 / 1C / PRS 101 / PAO1</strain>
    </source>
</reference>
<reference evidence="2" key="2">
    <citation type="submission" date="2015-05" db="PDB data bank">
        <title>Crystal structure of UDP-N-acetylglucosamine 1-carboxyvinyltransferase (UDP-N-acetylglucosamine enolpyruvyl transferase, EPT) from Pseudomonas aeruginosa.</title>
        <authorList>
            <person name="Abendroth J."/>
            <person name="Dranow D.M."/>
            <person name="Lorimer D.D."/>
            <person name="Edwards T.E."/>
        </authorList>
    </citation>
    <scope>X-RAY CRYSTALLOGRAPHY (1.70 ANGSTROMS) IN COMPLEX WITH SUBSTRATE ANALOG</scope>
</reference>
<comment type="function">
    <text evidence="1">Cell wall formation. Adds enolpyruvyl to UDP-N-acetylglucosamine.</text>
</comment>
<comment type="catalytic activity">
    <reaction evidence="1">
        <text>phosphoenolpyruvate + UDP-N-acetyl-alpha-D-glucosamine = UDP-N-acetyl-3-O-(1-carboxyvinyl)-alpha-D-glucosamine + phosphate</text>
        <dbReference type="Rhea" id="RHEA:18681"/>
        <dbReference type="ChEBI" id="CHEBI:43474"/>
        <dbReference type="ChEBI" id="CHEBI:57705"/>
        <dbReference type="ChEBI" id="CHEBI:58702"/>
        <dbReference type="ChEBI" id="CHEBI:68483"/>
        <dbReference type="EC" id="2.5.1.7"/>
    </reaction>
</comment>
<comment type="pathway">
    <text evidence="1">Cell wall biogenesis; peptidoglycan biosynthesis.</text>
</comment>
<comment type="subcellular location">
    <subcellularLocation>
        <location evidence="1">Cytoplasm</location>
    </subcellularLocation>
</comment>
<comment type="similarity">
    <text evidence="1">Belongs to the EPSP synthase family. MurA subfamily.</text>
</comment>
<gene>
    <name evidence="1" type="primary">murA</name>
    <name type="ordered locus">PA4450</name>
</gene>
<dbReference type="EC" id="2.5.1.7" evidence="1"/>
<dbReference type="EMBL" id="AE004091">
    <property type="protein sequence ID" value="AAG07838.1"/>
    <property type="molecule type" value="Genomic_DNA"/>
</dbReference>
<dbReference type="PIR" id="F83089">
    <property type="entry name" value="F83089"/>
</dbReference>
<dbReference type="RefSeq" id="NP_253140.1">
    <property type="nucleotide sequence ID" value="NC_002516.2"/>
</dbReference>
<dbReference type="RefSeq" id="WP_003094332.1">
    <property type="nucleotide sequence ID" value="NZ_QZGE01000004.1"/>
</dbReference>
<dbReference type="PDB" id="5BQ2">
    <property type="method" value="X-ray"/>
    <property type="resolution" value="1.70 A"/>
    <property type="chains" value="A/B/C/D=1-421"/>
</dbReference>
<dbReference type="PDBsum" id="5BQ2"/>
<dbReference type="SMR" id="Q9HVW7"/>
<dbReference type="FunCoup" id="Q9HVW7">
    <property type="interactions" value="524"/>
</dbReference>
<dbReference type="STRING" id="208964.PA4450"/>
<dbReference type="BindingDB" id="Q9HVW7"/>
<dbReference type="ChEMBL" id="CHEMBL1075208"/>
<dbReference type="DrugCentral" id="Q9HVW7"/>
<dbReference type="PaxDb" id="208964-PA4450"/>
<dbReference type="DNASU" id="880969"/>
<dbReference type="GeneID" id="880969"/>
<dbReference type="KEGG" id="pae:PA4450"/>
<dbReference type="PATRIC" id="fig|208964.12.peg.4660"/>
<dbReference type="PseudoCAP" id="PA4450"/>
<dbReference type="HOGENOM" id="CLU_027387_0_0_6"/>
<dbReference type="InParanoid" id="Q9HVW7"/>
<dbReference type="OrthoDB" id="9803760at2"/>
<dbReference type="PhylomeDB" id="Q9HVW7"/>
<dbReference type="BioCyc" id="PAER208964:G1FZ6-4538-MONOMER"/>
<dbReference type="SABIO-RK" id="Q9HVW7"/>
<dbReference type="UniPathway" id="UPA00219"/>
<dbReference type="EvolutionaryTrace" id="Q9HVW7"/>
<dbReference type="PHI-base" id="PHI:7630"/>
<dbReference type="Proteomes" id="UP000002438">
    <property type="component" value="Chromosome"/>
</dbReference>
<dbReference type="GO" id="GO:0005737">
    <property type="term" value="C:cytoplasm"/>
    <property type="evidence" value="ECO:0007669"/>
    <property type="project" value="UniProtKB-SubCell"/>
</dbReference>
<dbReference type="GO" id="GO:0008760">
    <property type="term" value="F:UDP-N-acetylglucosamine 1-carboxyvinyltransferase activity"/>
    <property type="evidence" value="ECO:0000318"/>
    <property type="project" value="GO_Central"/>
</dbReference>
<dbReference type="GO" id="GO:0051301">
    <property type="term" value="P:cell division"/>
    <property type="evidence" value="ECO:0007669"/>
    <property type="project" value="UniProtKB-KW"/>
</dbReference>
<dbReference type="GO" id="GO:0071555">
    <property type="term" value="P:cell wall organization"/>
    <property type="evidence" value="ECO:0007669"/>
    <property type="project" value="UniProtKB-KW"/>
</dbReference>
<dbReference type="GO" id="GO:0009252">
    <property type="term" value="P:peptidoglycan biosynthetic process"/>
    <property type="evidence" value="ECO:0000318"/>
    <property type="project" value="GO_Central"/>
</dbReference>
<dbReference type="GO" id="GO:0008360">
    <property type="term" value="P:regulation of cell shape"/>
    <property type="evidence" value="ECO:0007669"/>
    <property type="project" value="UniProtKB-KW"/>
</dbReference>
<dbReference type="GO" id="GO:0019277">
    <property type="term" value="P:UDP-N-acetylgalactosamine biosynthetic process"/>
    <property type="evidence" value="ECO:0007669"/>
    <property type="project" value="InterPro"/>
</dbReference>
<dbReference type="CDD" id="cd01555">
    <property type="entry name" value="UdpNAET"/>
    <property type="match status" value="1"/>
</dbReference>
<dbReference type="FunFam" id="3.65.10.10:FF:000002">
    <property type="entry name" value="UDP-N-acetylglucosamine 1-carboxyvinyltransferase"/>
    <property type="match status" value="1"/>
</dbReference>
<dbReference type="Gene3D" id="3.65.10.10">
    <property type="entry name" value="Enolpyruvate transferase domain"/>
    <property type="match status" value="2"/>
</dbReference>
<dbReference type="HAMAP" id="MF_00111">
    <property type="entry name" value="MurA"/>
    <property type="match status" value="1"/>
</dbReference>
<dbReference type="InterPro" id="IPR001986">
    <property type="entry name" value="Enolpyruvate_Tfrase_dom"/>
</dbReference>
<dbReference type="InterPro" id="IPR036968">
    <property type="entry name" value="Enolpyruvate_Tfrase_sf"/>
</dbReference>
<dbReference type="InterPro" id="IPR050068">
    <property type="entry name" value="MurA_subfamily"/>
</dbReference>
<dbReference type="InterPro" id="IPR013792">
    <property type="entry name" value="RNA3'P_cycl/enolpyr_Trfase_a/b"/>
</dbReference>
<dbReference type="InterPro" id="IPR005750">
    <property type="entry name" value="UDP_GlcNAc_COvinyl_MurA"/>
</dbReference>
<dbReference type="NCBIfam" id="TIGR01072">
    <property type="entry name" value="murA"/>
    <property type="match status" value="1"/>
</dbReference>
<dbReference type="NCBIfam" id="NF006873">
    <property type="entry name" value="PRK09369.1"/>
    <property type="match status" value="1"/>
</dbReference>
<dbReference type="PANTHER" id="PTHR43783">
    <property type="entry name" value="UDP-N-ACETYLGLUCOSAMINE 1-CARBOXYVINYLTRANSFERASE"/>
    <property type="match status" value="1"/>
</dbReference>
<dbReference type="PANTHER" id="PTHR43783:SF1">
    <property type="entry name" value="UDP-N-ACETYLGLUCOSAMINE 1-CARBOXYVINYLTRANSFERASE"/>
    <property type="match status" value="1"/>
</dbReference>
<dbReference type="Pfam" id="PF00275">
    <property type="entry name" value="EPSP_synthase"/>
    <property type="match status" value="1"/>
</dbReference>
<dbReference type="SUPFAM" id="SSF55205">
    <property type="entry name" value="EPT/RTPC-like"/>
    <property type="match status" value="1"/>
</dbReference>
<proteinExistence type="evidence at protein level"/>
<evidence type="ECO:0000255" key="1">
    <source>
        <dbReference type="HAMAP-Rule" id="MF_00111"/>
    </source>
</evidence>
<evidence type="ECO:0007744" key="2">
    <source>
        <dbReference type="PDB" id="5BQ2"/>
    </source>
</evidence>
<evidence type="ECO:0007829" key="3">
    <source>
        <dbReference type="PDB" id="5BQ2"/>
    </source>
</evidence>
<name>MURA_PSEAE</name>